<proteinExistence type="inferred from homology"/>
<protein>
    <recommendedName>
        <fullName evidence="1">UPF0298 protein SAV1122</fullName>
    </recommendedName>
</protein>
<reference key="1">
    <citation type="journal article" date="2001" name="Lancet">
        <title>Whole genome sequencing of meticillin-resistant Staphylococcus aureus.</title>
        <authorList>
            <person name="Kuroda M."/>
            <person name="Ohta T."/>
            <person name="Uchiyama I."/>
            <person name="Baba T."/>
            <person name="Yuzawa H."/>
            <person name="Kobayashi I."/>
            <person name="Cui L."/>
            <person name="Oguchi A."/>
            <person name="Aoki K."/>
            <person name="Nagai Y."/>
            <person name="Lian J.-Q."/>
            <person name="Ito T."/>
            <person name="Kanamori M."/>
            <person name="Matsumaru H."/>
            <person name="Maruyama A."/>
            <person name="Murakami H."/>
            <person name="Hosoyama A."/>
            <person name="Mizutani-Ui Y."/>
            <person name="Takahashi N.K."/>
            <person name="Sawano T."/>
            <person name="Inoue R."/>
            <person name="Kaito C."/>
            <person name="Sekimizu K."/>
            <person name="Hirakawa H."/>
            <person name="Kuhara S."/>
            <person name="Goto S."/>
            <person name="Yabuzaki J."/>
            <person name="Kanehisa M."/>
            <person name="Yamashita A."/>
            <person name="Oshima K."/>
            <person name="Furuya K."/>
            <person name="Yoshino C."/>
            <person name="Shiba T."/>
            <person name="Hattori M."/>
            <person name="Ogasawara N."/>
            <person name="Hayashi H."/>
            <person name="Hiramatsu K."/>
        </authorList>
    </citation>
    <scope>NUCLEOTIDE SEQUENCE [LARGE SCALE GENOMIC DNA]</scope>
    <source>
        <strain>Mu50 / ATCC 700699</strain>
    </source>
</reference>
<dbReference type="EMBL" id="BA000017">
    <property type="protein sequence ID" value="BAB57284.1"/>
    <property type="molecule type" value="Genomic_DNA"/>
</dbReference>
<dbReference type="RefSeq" id="WP_001049150.1">
    <property type="nucleotide sequence ID" value="NC_002758.2"/>
</dbReference>
<dbReference type="SMR" id="P60416"/>
<dbReference type="KEGG" id="sav:SAV1122"/>
<dbReference type="HOGENOM" id="CLU_159890_2_1_9"/>
<dbReference type="PhylomeDB" id="P60416"/>
<dbReference type="Proteomes" id="UP000002481">
    <property type="component" value="Chromosome"/>
</dbReference>
<dbReference type="GO" id="GO:0005737">
    <property type="term" value="C:cytoplasm"/>
    <property type="evidence" value="ECO:0007669"/>
    <property type="project" value="UniProtKB-SubCell"/>
</dbReference>
<dbReference type="HAMAP" id="MF_01126">
    <property type="entry name" value="UPF0298"/>
    <property type="match status" value="1"/>
</dbReference>
<dbReference type="InterPro" id="IPR016979">
    <property type="entry name" value="DUF2129"/>
</dbReference>
<dbReference type="Pfam" id="PF09902">
    <property type="entry name" value="DUF2129"/>
    <property type="match status" value="1"/>
</dbReference>
<dbReference type="PIRSF" id="PIRSF031653">
    <property type="entry name" value="UCP031653"/>
    <property type="match status" value="1"/>
</dbReference>
<keyword id="KW-0963">Cytoplasm</keyword>
<evidence type="ECO:0000255" key="1">
    <source>
        <dbReference type="HAMAP-Rule" id="MF_01126"/>
    </source>
</evidence>
<feature type="chain" id="PRO_0000074668" description="UPF0298 protein SAV1122">
    <location>
        <begin position="1"/>
        <end position="84"/>
    </location>
</feature>
<organism>
    <name type="scientific">Staphylococcus aureus (strain Mu50 / ATCC 700699)</name>
    <dbReference type="NCBI Taxonomy" id="158878"/>
    <lineage>
        <taxon>Bacteria</taxon>
        <taxon>Bacillati</taxon>
        <taxon>Bacillota</taxon>
        <taxon>Bacilli</taxon>
        <taxon>Bacillales</taxon>
        <taxon>Staphylococcaceae</taxon>
        <taxon>Staphylococcus</taxon>
    </lineage>
</organism>
<name>Y1122_STAAM</name>
<comment type="subcellular location">
    <subcellularLocation>
        <location evidence="1">Cytoplasm</location>
    </subcellularLocation>
</comment>
<comment type="similarity">
    <text evidence="1">Belongs to the UPF0298 family.</text>
</comment>
<sequence>MNLIPRTSIVVYLKHMKHERQIRKYGHIVHSNRDRKFVIMYVNEQDVDQIVHKLMQLKYVRHIDGSPYKYLKKTYEKEKHEIYN</sequence>
<accession>P60416</accession>
<accession>Q99UY2</accession>
<gene>
    <name type="ordered locus">SAV1122</name>
</gene>